<feature type="chain" id="PRO_1000197793" description="Putative membrane protein insertion efficiency factor">
    <location>
        <begin position="1"/>
        <end position="82"/>
    </location>
</feature>
<dbReference type="EMBL" id="AM946015">
    <property type="protein sequence ID" value="CAR41053.1"/>
    <property type="molecule type" value="Genomic_DNA"/>
</dbReference>
<dbReference type="STRING" id="218495.SUB0408"/>
<dbReference type="KEGG" id="sub:SUB0408"/>
<dbReference type="eggNOG" id="COG0759">
    <property type="taxonomic scope" value="Bacteria"/>
</dbReference>
<dbReference type="HOGENOM" id="CLU_144811_5_2_9"/>
<dbReference type="OrthoDB" id="9801753at2"/>
<dbReference type="Proteomes" id="UP000000449">
    <property type="component" value="Chromosome"/>
</dbReference>
<dbReference type="GO" id="GO:0005886">
    <property type="term" value="C:plasma membrane"/>
    <property type="evidence" value="ECO:0007669"/>
    <property type="project" value="UniProtKB-SubCell"/>
</dbReference>
<dbReference type="HAMAP" id="MF_00386">
    <property type="entry name" value="UPF0161_YidD"/>
    <property type="match status" value="1"/>
</dbReference>
<dbReference type="InterPro" id="IPR002696">
    <property type="entry name" value="Membr_insert_effic_factor_YidD"/>
</dbReference>
<dbReference type="NCBIfam" id="TIGR00278">
    <property type="entry name" value="membrane protein insertion efficiency factor YidD"/>
    <property type="match status" value="1"/>
</dbReference>
<dbReference type="PANTHER" id="PTHR33383">
    <property type="entry name" value="MEMBRANE PROTEIN INSERTION EFFICIENCY FACTOR-RELATED"/>
    <property type="match status" value="1"/>
</dbReference>
<dbReference type="PANTHER" id="PTHR33383:SF1">
    <property type="entry name" value="MEMBRANE PROTEIN INSERTION EFFICIENCY FACTOR-RELATED"/>
    <property type="match status" value="1"/>
</dbReference>
<dbReference type="Pfam" id="PF01809">
    <property type="entry name" value="YidD"/>
    <property type="match status" value="1"/>
</dbReference>
<dbReference type="SMART" id="SM01234">
    <property type="entry name" value="Haemolytic"/>
    <property type="match status" value="1"/>
</dbReference>
<proteinExistence type="inferred from homology"/>
<reference key="1">
    <citation type="journal article" date="2009" name="BMC Genomics">
        <title>Evidence for niche adaptation in the genome of the bovine pathogen Streptococcus uberis.</title>
        <authorList>
            <person name="Ward P.N."/>
            <person name="Holden M.T.G."/>
            <person name="Leigh J.A."/>
            <person name="Lennard N."/>
            <person name="Bignell A."/>
            <person name="Barron A."/>
            <person name="Clark L."/>
            <person name="Quail M.A."/>
            <person name="Woodward J."/>
            <person name="Barrell B.G."/>
            <person name="Egan S.A."/>
            <person name="Field T.R."/>
            <person name="Maskell D."/>
            <person name="Kehoe M."/>
            <person name="Dowson C.G."/>
            <person name="Chanter N."/>
            <person name="Whatmore A.M."/>
            <person name="Bentley S.D."/>
            <person name="Parkhill J."/>
        </authorList>
    </citation>
    <scope>NUCLEOTIDE SEQUENCE [LARGE SCALE GENOMIC DNA]</scope>
    <source>
        <strain>ATCC BAA-854 / 0140J</strain>
    </source>
</reference>
<evidence type="ECO:0000255" key="1">
    <source>
        <dbReference type="HAMAP-Rule" id="MF_00386"/>
    </source>
</evidence>
<name>YIDD_STRU0</name>
<accession>B9DTS7</accession>
<gene>
    <name type="ordered locus">SUB0408</name>
</gene>
<keyword id="KW-1003">Cell membrane</keyword>
<keyword id="KW-0472">Membrane</keyword>
<keyword id="KW-1185">Reference proteome</keyword>
<sequence>MKSIIINFVRLYQKWISPLFPPSCRYRPTCSTYMIEAVEKHGIKGVLMGIARILRCHPFVEGGEDPVPDEFTLRRNPQKGKK</sequence>
<protein>
    <recommendedName>
        <fullName evidence="1">Putative membrane protein insertion efficiency factor</fullName>
    </recommendedName>
</protein>
<organism>
    <name type="scientific">Streptococcus uberis (strain ATCC BAA-854 / 0140J)</name>
    <dbReference type="NCBI Taxonomy" id="218495"/>
    <lineage>
        <taxon>Bacteria</taxon>
        <taxon>Bacillati</taxon>
        <taxon>Bacillota</taxon>
        <taxon>Bacilli</taxon>
        <taxon>Lactobacillales</taxon>
        <taxon>Streptococcaceae</taxon>
        <taxon>Streptococcus</taxon>
    </lineage>
</organism>
<comment type="function">
    <text evidence="1">Could be involved in insertion of integral membrane proteins into the membrane.</text>
</comment>
<comment type="subcellular location">
    <subcellularLocation>
        <location evidence="1">Cell membrane</location>
        <topology evidence="1">Peripheral membrane protein</topology>
        <orientation evidence="1">Cytoplasmic side</orientation>
    </subcellularLocation>
</comment>
<comment type="similarity">
    <text evidence="1">Belongs to the UPF0161 family.</text>
</comment>